<sequence length="335" mass="36030">MTLPLLGPMTLSGFAHSWFFLFLFVVAGLVALYILMQLARQRRMLRFANMELLESVAPKRPSRWRHVPAILLVLSLLLFTIAMAGPTHDVRIPRNRAVVMLVIDVSQSMRATDVEPSRMVAAQEAAKQFADELTPGINLGLIAYAGTATVLVSPTTNREATKNALDKLQFADRTATGEAIFTALQAIATVGAVIGGGDTPPPARIVLFSDGKETMPTNPDNPKGAYTAARTAKDQGVPISTISFGTPYGFVEINDQRQPVPVDDETMKKVAQLSGGNSYNAATLAELRAVYSSLQQQIGYETIKGDASVGWLRLGALALALAALAALLINRRLPT</sequence>
<feature type="chain" id="PRO_0000057648" description="UPF0353 protein Rv1481">
    <location>
        <begin position="1"/>
        <end position="335"/>
    </location>
</feature>
<feature type="transmembrane region" description="Helical" evidence="1">
    <location>
        <begin position="18"/>
        <end position="38"/>
    </location>
</feature>
<feature type="transmembrane region" description="Helical" evidence="1">
    <location>
        <begin position="67"/>
        <end position="87"/>
    </location>
</feature>
<feature type="transmembrane region" description="Helical" evidence="1">
    <location>
        <begin position="309"/>
        <end position="329"/>
    </location>
</feature>
<feature type="domain" description="VWFA" evidence="1">
    <location>
        <begin position="98"/>
        <end position="294"/>
    </location>
</feature>
<reference key="1">
    <citation type="journal article" date="1998" name="Nature">
        <title>Deciphering the biology of Mycobacterium tuberculosis from the complete genome sequence.</title>
        <authorList>
            <person name="Cole S.T."/>
            <person name="Brosch R."/>
            <person name="Parkhill J."/>
            <person name="Garnier T."/>
            <person name="Churcher C.M."/>
            <person name="Harris D.E."/>
            <person name="Gordon S.V."/>
            <person name="Eiglmeier K."/>
            <person name="Gas S."/>
            <person name="Barry C.E. III"/>
            <person name="Tekaia F."/>
            <person name="Badcock K."/>
            <person name="Basham D."/>
            <person name="Brown D."/>
            <person name="Chillingworth T."/>
            <person name="Connor R."/>
            <person name="Davies R.M."/>
            <person name="Devlin K."/>
            <person name="Feltwell T."/>
            <person name="Gentles S."/>
            <person name="Hamlin N."/>
            <person name="Holroyd S."/>
            <person name="Hornsby T."/>
            <person name="Jagels K."/>
            <person name="Krogh A."/>
            <person name="McLean J."/>
            <person name="Moule S."/>
            <person name="Murphy L.D."/>
            <person name="Oliver S."/>
            <person name="Osborne J."/>
            <person name="Quail M.A."/>
            <person name="Rajandream M.A."/>
            <person name="Rogers J."/>
            <person name="Rutter S."/>
            <person name="Seeger K."/>
            <person name="Skelton S."/>
            <person name="Squares S."/>
            <person name="Squares R."/>
            <person name="Sulston J.E."/>
            <person name="Taylor K."/>
            <person name="Whitehead S."/>
            <person name="Barrell B.G."/>
        </authorList>
    </citation>
    <scope>NUCLEOTIDE SEQUENCE [LARGE SCALE GENOMIC DNA]</scope>
    <source>
        <strain>ATCC 25618 / H37Rv</strain>
    </source>
</reference>
<reference key="2">
    <citation type="journal article" date="2011" name="Mol. Cell. Proteomics">
        <title>Proteogenomic analysis of Mycobacterium tuberculosis by high resolution mass spectrometry.</title>
        <authorList>
            <person name="Kelkar D.S."/>
            <person name="Kumar D."/>
            <person name="Kumar P."/>
            <person name="Balakrishnan L."/>
            <person name="Muthusamy B."/>
            <person name="Yadav A.K."/>
            <person name="Shrivastava P."/>
            <person name="Marimuthu A."/>
            <person name="Anand S."/>
            <person name="Sundaram H."/>
            <person name="Kingsbury R."/>
            <person name="Harsha H.C."/>
            <person name="Nair B."/>
            <person name="Prasad T.S."/>
            <person name="Chauhan D.S."/>
            <person name="Katoch K."/>
            <person name="Katoch V.M."/>
            <person name="Kumar P."/>
            <person name="Chaerkady R."/>
            <person name="Ramachandran S."/>
            <person name="Dash D."/>
            <person name="Pandey A."/>
        </authorList>
    </citation>
    <scope>IDENTIFICATION BY MASS SPECTROMETRY [LARGE SCALE ANALYSIS]</scope>
    <source>
        <strain>ATCC 25618 / H37Rv</strain>
    </source>
</reference>
<keyword id="KW-1003">Cell membrane</keyword>
<keyword id="KW-0472">Membrane</keyword>
<keyword id="KW-1185">Reference proteome</keyword>
<keyword id="KW-0812">Transmembrane</keyword>
<keyword id="KW-1133">Transmembrane helix</keyword>
<proteinExistence type="evidence at protein level"/>
<name>Y1481_MYCTU</name>
<accession>P9WFJ7</accession>
<accession>L0T6S5</accession>
<accession>P64855</accession>
<accession>P71762</accession>
<gene>
    <name type="ordered locus">Rv1481</name>
    <name type="ORF">MTCY277.02</name>
</gene>
<comment type="subcellular location">
    <subcellularLocation>
        <location evidence="1">Cell membrane</location>
        <topology evidence="1">Multi-pass membrane protein</topology>
    </subcellularLocation>
</comment>
<comment type="similarity">
    <text evidence="1">Belongs to the UPF0353 family.</text>
</comment>
<organism>
    <name type="scientific">Mycobacterium tuberculosis (strain ATCC 25618 / H37Rv)</name>
    <dbReference type="NCBI Taxonomy" id="83332"/>
    <lineage>
        <taxon>Bacteria</taxon>
        <taxon>Bacillati</taxon>
        <taxon>Actinomycetota</taxon>
        <taxon>Actinomycetes</taxon>
        <taxon>Mycobacteriales</taxon>
        <taxon>Mycobacteriaceae</taxon>
        <taxon>Mycobacterium</taxon>
        <taxon>Mycobacterium tuberculosis complex</taxon>
    </lineage>
</organism>
<dbReference type="EMBL" id="AL123456">
    <property type="protein sequence ID" value="CCP44241.1"/>
    <property type="molecule type" value="Genomic_DNA"/>
</dbReference>
<dbReference type="PIR" id="D70874">
    <property type="entry name" value="D70874"/>
</dbReference>
<dbReference type="RefSeq" id="NP_215997.1">
    <property type="nucleotide sequence ID" value="NC_000962.3"/>
</dbReference>
<dbReference type="RefSeq" id="WP_003407530.1">
    <property type="nucleotide sequence ID" value="NZ_NVQJ01000004.1"/>
</dbReference>
<dbReference type="SMR" id="P9WFJ7"/>
<dbReference type="STRING" id="83332.Rv1481"/>
<dbReference type="PaxDb" id="83332-Rv1481"/>
<dbReference type="DNASU" id="886533"/>
<dbReference type="GeneID" id="886533"/>
<dbReference type="KEGG" id="mtu:Rv1481"/>
<dbReference type="KEGG" id="mtv:RVBD_1481"/>
<dbReference type="TubercuList" id="Rv1481"/>
<dbReference type="eggNOG" id="COG2304">
    <property type="taxonomic scope" value="Bacteria"/>
</dbReference>
<dbReference type="InParanoid" id="P9WFJ7"/>
<dbReference type="OrthoDB" id="8882959at2"/>
<dbReference type="PhylomeDB" id="P9WFJ7"/>
<dbReference type="Proteomes" id="UP000001584">
    <property type="component" value="Chromosome"/>
</dbReference>
<dbReference type="GO" id="GO:0005886">
    <property type="term" value="C:plasma membrane"/>
    <property type="evidence" value="ECO:0007005"/>
    <property type="project" value="MTBBASE"/>
</dbReference>
<dbReference type="CDD" id="cd00198">
    <property type="entry name" value="vWFA"/>
    <property type="match status" value="1"/>
</dbReference>
<dbReference type="FunFam" id="3.40.50.410:FF:000078">
    <property type="entry name" value="UPF0353 protein RN09_1826"/>
    <property type="match status" value="1"/>
</dbReference>
<dbReference type="Gene3D" id="3.40.50.410">
    <property type="entry name" value="von Willebrand factor, type A domain"/>
    <property type="match status" value="1"/>
</dbReference>
<dbReference type="HAMAP" id="MF_01340">
    <property type="entry name" value="UPF0353"/>
    <property type="match status" value="1"/>
</dbReference>
<dbReference type="InterPro" id="IPR024163">
    <property type="entry name" value="Aerotolerance_reg_N"/>
</dbReference>
<dbReference type="InterPro" id="IPR022933">
    <property type="entry name" value="UPF0353"/>
</dbReference>
<dbReference type="InterPro" id="IPR050768">
    <property type="entry name" value="UPF0353/GerABKA_families"/>
</dbReference>
<dbReference type="InterPro" id="IPR002035">
    <property type="entry name" value="VWF_A"/>
</dbReference>
<dbReference type="InterPro" id="IPR036465">
    <property type="entry name" value="vWFA_dom_sf"/>
</dbReference>
<dbReference type="NCBIfam" id="NF010238">
    <property type="entry name" value="PRK13685.1"/>
    <property type="match status" value="1"/>
</dbReference>
<dbReference type="PANTHER" id="PTHR22550:SF5">
    <property type="entry name" value="LEUCINE ZIPPER PROTEIN 4"/>
    <property type="match status" value="1"/>
</dbReference>
<dbReference type="PANTHER" id="PTHR22550">
    <property type="entry name" value="SPORE GERMINATION PROTEIN"/>
    <property type="match status" value="1"/>
</dbReference>
<dbReference type="Pfam" id="PF07584">
    <property type="entry name" value="BatA"/>
    <property type="match status" value="1"/>
</dbReference>
<dbReference type="Pfam" id="PF13519">
    <property type="entry name" value="VWA_2"/>
    <property type="match status" value="1"/>
</dbReference>
<dbReference type="SMART" id="SM00327">
    <property type="entry name" value="VWA"/>
    <property type="match status" value="1"/>
</dbReference>
<dbReference type="SUPFAM" id="SSF53300">
    <property type="entry name" value="vWA-like"/>
    <property type="match status" value="1"/>
</dbReference>
<dbReference type="PROSITE" id="PS50234">
    <property type="entry name" value="VWFA"/>
    <property type="match status" value="1"/>
</dbReference>
<evidence type="ECO:0000255" key="1">
    <source>
        <dbReference type="HAMAP-Rule" id="MF_01340"/>
    </source>
</evidence>
<protein>
    <recommendedName>
        <fullName evidence="1">UPF0353 protein Rv1481</fullName>
    </recommendedName>
</protein>